<name>MDV1_PHANO</name>
<feature type="chain" id="PRO_0000330110" description="Mitochondrial division protein 1">
    <location>
        <begin position="1"/>
        <end position="681"/>
    </location>
</feature>
<feature type="repeat" description="WD 1">
    <location>
        <begin position="326"/>
        <end position="367"/>
    </location>
</feature>
<feature type="repeat" description="WD 2">
    <location>
        <begin position="369"/>
        <end position="405"/>
    </location>
</feature>
<feature type="repeat" description="WD 3">
    <location>
        <begin position="458"/>
        <end position="497"/>
    </location>
</feature>
<feature type="repeat" description="WD 4">
    <location>
        <begin position="505"/>
        <end position="561"/>
    </location>
</feature>
<feature type="repeat" description="WD 5">
    <location>
        <begin position="564"/>
        <end position="603"/>
    </location>
</feature>
<feature type="repeat" description="WD 6">
    <location>
        <begin position="605"/>
        <end position="640"/>
    </location>
</feature>
<feature type="repeat" description="WD 7">
    <location>
        <begin position="647"/>
        <end position="681"/>
    </location>
</feature>
<feature type="region of interest" description="Disordered" evidence="3">
    <location>
        <begin position="1"/>
        <end position="25"/>
    </location>
</feature>
<feature type="region of interest" description="Disordered" evidence="3">
    <location>
        <begin position="146"/>
        <end position="171"/>
    </location>
</feature>
<feature type="region of interest" description="Disordered" evidence="3">
    <location>
        <begin position="259"/>
        <end position="279"/>
    </location>
</feature>
<feature type="region of interest" description="Disordered" evidence="3">
    <location>
        <begin position="406"/>
        <end position="449"/>
    </location>
</feature>
<feature type="coiled-coil region" evidence="2">
    <location>
        <begin position="211"/>
        <end position="263"/>
    </location>
</feature>
<feature type="compositionally biased region" description="Low complexity" evidence="3">
    <location>
        <begin position="11"/>
        <end position="20"/>
    </location>
</feature>
<feature type="compositionally biased region" description="Polar residues" evidence="3">
    <location>
        <begin position="270"/>
        <end position="279"/>
    </location>
</feature>
<feature type="compositionally biased region" description="Acidic residues" evidence="3">
    <location>
        <begin position="416"/>
        <end position="431"/>
    </location>
</feature>
<gene>
    <name type="primary">MDV1</name>
    <name type="ORF">SNOG_13958</name>
</gene>
<dbReference type="EMBL" id="CH445353">
    <property type="protein sequence ID" value="EAT78583.2"/>
    <property type="molecule type" value="Genomic_DNA"/>
</dbReference>
<dbReference type="RefSeq" id="XP_001804158.1">
    <property type="nucleotide sequence ID" value="XM_001804106.1"/>
</dbReference>
<dbReference type="SMR" id="Q0U2T3"/>
<dbReference type="FunCoup" id="Q0U2T3">
    <property type="interactions" value="70"/>
</dbReference>
<dbReference type="STRING" id="321614.Q0U2T3"/>
<dbReference type="EnsemblFungi" id="SNOT_13958">
    <property type="protein sequence ID" value="SNOT_13958"/>
    <property type="gene ID" value="SNOG_13958"/>
</dbReference>
<dbReference type="GeneID" id="5981081"/>
<dbReference type="KEGG" id="pno:SNOG_13958"/>
<dbReference type="VEuPathDB" id="FungiDB:JI435_139580"/>
<dbReference type="eggNOG" id="KOG4155">
    <property type="taxonomic scope" value="Eukaryota"/>
</dbReference>
<dbReference type="HOGENOM" id="CLU_012350_1_1_1"/>
<dbReference type="InParanoid" id="Q0U2T3"/>
<dbReference type="OrthoDB" id="496at2759"/>
<dbReference type="Proteomes" id="UP000001055">
    <property type="component" value="Unassembled WGS sequence"/>
</dbReference>
<dbReference type="GO" id="GO:0005741">
    <property type="term" value="C:mitochondrial outer membrane"/>
    <property type="evidence" value="ECO:0007669"/>
    <property type="project" value="UniProtKB-SubCell"/>
</dbReference>
<dbReference type="GO" id="GO:0005739">
    <property type="term" value="C:mitochondrion"/>
    <property type="evidence" value="ECO:0000318"/>
    <property type="project" value="GO_Central"/>
</dbReference>
<dbReference type="GO" id="GO:0000266">
    <property type="term" value="P:mitochondrial fission"/>
    <property type="evidence" value="ECO:0000318"/>
    <property type="project" value="GO_Central"/>
</dbReference>
<dbReference type="GO" id="GO:0016559">
    <property type="term" value="P:peroxisome fission"/>
    <property type="evidence" value="ECO:0000318"/>
    <property type="project" value="GO_Central"/>
</dbReference>
<dbReference type="CDD" id="cd22881">
    <property type="entry name" value="Mdv1_N"/>
    <property type="match status" value="1"/>
</dbReference>
<dbReference type="CDD" id="cd00200">
    <property type="entry name" value="WD40"/>
    <property type="match status" value="1"/>
</dbReference>
<dbReference type="FunFam" id="2.130.10.10:FF:000404">
    <property type="entry name" value="Mitochondrial division protein 1"/>
    <property type="match status" value="1"/>
</dbReference>
<dbReference type="FunFam" id="2.130.10.10:FF:000881">
    <property type="entry name" value="Mitochondrial division protein 1"/>
    <property type="match status" value="1"/>
</dbReference>
<dbReference type="Gene3D" id="6.10.280.220">
    <property type="match status" value="1"/>
</dbReference>
<dbReference type="Gene3D" id="2.130.10.10">
    <property type="entry name" value="YVTN repeat-like/Quinoprotein amine dehydrogenase"/>
    <property type="match status" value="2"/>
</dbReference>
<dbReference type="InterPro" id="IPR020472">
    <property type="entry name" value="G-protein_beta_WD-40_rep"/>
</dbReference>
<dbReference type="InterPro" id="IPR015943">
    <property type="entry name" value="WD40/YVTN_repeat-like_dom_sf"/>
</dbReference>
<dbReference type="InterPro" id="IPR019775">
    <property type="entry name" value="WD40_repeat_CS"/>
</dbReference>
<dbReference type="InterPro" id="IPR036322">
    <property type="entry name" value="WD40_repeat_dom_sf"/>
</dbReference>
<dbReference type="InterPro" id="IPR001680">
    <property type="entry name" value="WD40_rpt"/>
</dbReference>
<dbReference type="PANTHER" id="PTHR19855:SF28">
    <property type="entry name" value="CCR4-ASSOCIATED FACTOR 4"/>
    <property type="match status" value="1"/>
</dbReference>
<dbReference type="PANTHER" id="PTHR19855">
    <property type="entry name" value="WD40 REPEAT PROTEIN 12, 37"/>
    <property type="match status" value="1"/>
</dbReference>
<dbReference type="Pfam" id="PF00400">
    <property type="entry name" value="WD40"/>
    <property type="match status" value="4"/>
</dbReference>
<dbReference type="PRINTS" id="PR00320">
    <property type="entry name" value="GPROTEINBRPT"/>
</dbReference>
<dbReference type="SMART" id="SM00320">
    <property type="entry name" value="WD40"/>
    <property type="match status" value="6"/>
</dbReference>
<dbReference type="SUPFAM" id="SSF50978">
    <property type="entry name" value="WD40 repeat-like"/>
    <property type="match status" value="1"/>
</dbReference>
<dbReference type="PROSITE" id="PS00678">
    <property type="entry name" value="WD_REPEATS_1"/>
    <property type="match status" value="3"/>
</dbReference>
<dbReference type="PROSITE" id="PS50082">
    <property type="entry name" value="WD_REPEATS_2"/>
    <property type="match status" value="5"/>
</dbReference>
<dbReference type="PROSITE" id="PS50294">
    <property type="entry name" value="WD_REPEATS_REGION"/>
    <property type="match status" value="1"/>
</dbReference>
<keyword id="KW-0175">Coiled coil</keyword>
<keyword id="KW-0472">Membrane</keyword>
<keyword id="KW-0496">Mitochondrion</keyword>
<keyword id="KW-1000">Mitochondrion outer membrane</keyword>
<keyword id="KW-0677">Repeat</keyword>
<keyword id="KW-0853">WD repeat</keyword>
<reference key="1">
    <citation type="journal article" date="2007" name="Plant Cell">
        <title>Dothideomycete-plant interactions illuminated by genome sequencing and EST analysis of the wheat pathogen Stagonospora nodorum.</title>
        <authorList>
            <person name="Hane J.K."/>
            <person name="Lowe R.G.T."/>
            <person name="Solomon P.S."/>
            <person name="Tan K.-C."/>
            <person name="Schoch C.L."/>
            <person name="Spatafora J.W."/>
            <person name="Crous P.W."/>
            <person name="Kodira C.D."/>
            <person name="Birren B.W."/>
            <person name="Galagan J.E."/>
            <person name="Torriani S.F.F."/>
            <person name="McDonald B.A."/>
            <person name="Oliver R.P."/>
        </authorList>
    </citation>
    <scope>NUCLEOTIDE SEQUENCE [LARGE SCALE GENOMIC DNA]</scope>
    <source>
        <strain>SN15 / ATCC MYA-4574 / FGSC 10173</strain>
    </source>
</reference>
<proteinExistence type="inferred from homology"/>
<sequence>MASSFARDGSPSRGRSTSPRPRIPEESLEASLMDGLPDTRQLQAFGRKVTATAGSLIGTEGVGQHYQNALGELHRELRRPMLQRSVFSFAQTTPREIVRSRISVPEIQQRALAYVPDDMLANIPEDNNEFSLFQGFQATLPDEPETIKKKGKTHNARGQRLIGGELEDDEYSKLPPSMQRLQKQKHSMSHQLEMMGVRKHMCVAEIHEIDNKIANLNTMRKMVLDRLAGLEIQEEELAQDLLGVDNEIEDLQEELDDAAALAPPKEDSRPTTSGSEAVSETFMSESIYQKISPKSKNRGKKPIRRPSMRVLHEHLESGSKIKELPAHNDSITAMDFDAPWGTLVTASLDDTVRVWDLNAGRCIGMLEGHLSSVRCLQVEESIVATGSMDATIRLWDLSRAEYAPQDNRVNKRGGEGEGEGDGDAQEDEDGLAFENSSDAPPAPPPTIMQDVPLFTLESHVDEITAIHFKGDTLVSGSADKTLRQWDLVKGRCVQTLDVLWAAAQATATNNASSEWRPTGRSMDASADFVGAIQVFDAALACGTADGMVRLWDLRSGQVHRSLVGHTGPVTALQFDDVHLVTGSADRSIRIWDLRTGSIYDAYAYDNPVTSMMFDSRRIVSAAGESVVKVYDKTDGRHWNCGPGVGADEDDNTSHAMIERVRIKDGYLVEGRRDGTVGVWSC</sequence>
<organism>
    <name type="scientific">Phaeosphaeria nodorum (strain SN15 / ATCC MYA-4574 / FGSC 10173)</name>
    <name type="common">Glume blotch fungus</name>
    <name type="synonym">Parastagonospora nodorum</name>
    <dbReference type="NCBI Taxonomy" id="321614"/>
    <lineage>
        <taxon>Eukaryota</taxon>
        <taxon>Fungi</taxon>
        <taxon>Dikarya</taxon>
        <taxon>Ascomycota</taxon>
        <taxon>Pezizomycotina</taxon>
        <taxon>Dothideomycetes</taxon>
        <taxon>Pleosporomycetidae</taxon>
        <taxon>Pleosporales</taxon>
        <taxon>Pleosporineae</taxon>
        <taxon>Phaeosphaeriaceae</taxon>
        <taxon>Parastagonospora</taxon>
    </lineage>
</organism>
<comment type="function">
    <text evidence="1">Involved in mitochondrial fission. Acts as an adapter protein required to form mitochondrial fission complexes. Formation of these complexes is required to promote constriction and fission of the mitochondrial compartment at a late step in mitochondrial division (By similarity).</text>
</comment>
<comment type="subcellular location">
    <subcellularLocation>
        <location evidence="1">Mitochondrion outer membrane</location>
        <topology evidence="1">Peripheral membrane protein</topology>
        <orientation evidence="1">Cytoplasmic side</orientation>
    </subcellularLocation>
</comment>
<comment type="similarity">
    <text evidence="4">Belongs to the WD repeat MDV1/CAF4 family.</text>
</comment>
<protein>
    <recommendedName>
        <fullName>Mitochondrial division protein 1</fullName>
    </recommendedName>
</protein>
<evidence type="ECO:0000250" key="1"/>
<evidence type="ECO:0000255" key="2"/>
<evidence type="ECO:0000256" key="3">
    <source>
        <dbReference type="SAM" id="MobiDB-lite"/>
    </source>
</evidence>
<evidence type="ECO:0000305" key="4"/>
<accession>Q0U2T3</accession>